<sequence>MEQAHTQLIAQLNERILAADNTPLYIKFAETVKNAVRSGVLEHGNILPGERDLSQLTGVSRITVRKAMQALEEEGVVTRSRGYGTQINNIFEYSLKEARGFSQQVVLRGKKPDTLWVNKRVVKCPEEVAQQLAVEAGSDVFLLKRIRYVDEEAVSIEESWVPAHLIHDVDAIGISLYDYFRSQHIYPQRTRSRVSARMPDAEFQSHIQLDSKIPVLVIKQVALDQQQRPIEYSISHCRSDLYVFVCEE</sequence>
<accession>P0ACM8</accession>
<accession>O08014</accession>
<accession>P76420</accession>
<organism>
    <name type="scientific">Shigella flexneri</name>
    <dbReference type="NCBI Taxonomy" id="623"/>
    <lineage>
        <taxon>Bacteria</taxon>
        <taxon>Pseudomonadati</taxon>
        <taxon>Pseudomonadota</taxon>
        <taxon>Gammaproteobacteria</taxon>
        <taxon>Enterobacterales</taxon>
        <taxon>Enterobacteriaceae</taxon>
        <taxon>Shigella</taxon>
    </lineage>
</organism>
<feature type="chain" id="PRO_0000050679" description="HTH-type transcriptional regulator GgaR">
    <location>
        <begin position="1"/>
        <end position="248"/>
    </location>
</feature>
<feature type="domain" description="HTH gntR-type" evidence="2">
    <location>
        <begin position="22"/>
        <end position="90"/>
    </location>
</feature>
<feature type="DNA-binding region" description="H-T-H motif" evidence="2">
    <location>
        <begin position="50"/>
        <end position="69"/>
    </location>
</feature>
<proteinExistence type="inferred from homology"/>
<comment type="function">
    <text evidence="1">Transcriptional regulator that regulates glycogen accumulation in response to the amount of glucose available to the cell. Acts as a repressor of the yegTUV operon, which may be involved in glycogen accumulation.</text>
</comment>
<comment type="activity regulation">
    <text evidence="1">Senses ADP-glucose (ADPG), which is the substrate for glycogen elongation, as an effector. In the presence of ADPG, GgaR becomes inactive and derepresses the yegTUV operon, leading to glycogen accumulation. In contrast, in the absence of glucose, the concentration of ADPG decreases, GgaR becomes active, and glycogen accumulation is repressed.</text>
</comment>
<reference key="1">
    <citation type="journal article" date="2003" name="Infect. Immun.">
        <title>Complete genome sequence and comparative genomics of Shigella flexneri serotype 2a strain 2457T.</title>
        <authorList>
            <person name="Wei J."/>
            <person name="Goldberg M.B."/>
            <person name="Burland V."/>
            <person name="Venkatesan M.M."/>
            <person name="Deng W."/>
            <person name="Fournier G."/>
            <person name="Mayhew G.F."/>
            <person name="Plunkett G. III"/>
            <person name="Rose D.J."/>
            <person name="Darling A."/>
            <person name="Mau B."/>
            <person name="Perna N.T."/>
            <person name="Payne S.M."/>
            <person name="Runyen-Janecky L.J."/>
            <person name="Zhou S."/>
            <person name="Schwartz D.C."/>
            <person name="Blattner F.R."/>
        </authorList>
    </citation>
    <scope>NUCLEOTIDE SEQUENCE [LARGE SCALE GENOMIC DNA]</scope>
    <source>
        <strain>ATCC 700930 / 2457T / Serotype 2a</strain>
    </source>
</reference>
<dbReference type="EMBL" id="AE014073">
    <property type="protein sequence ID" value="AAP17520.1"/>
    <property type="molecule type" value="Genomic_DNA"/>
</dbReference>
<dbReference type="RefSeq" id="WP_000434038.1">
    <property type="nucleotide sequence ID" value="NZ_WHSI01000027.1"/>
</dbReference>
<dbReference type="SMR" id="P0ACM8"/>
<dbReference type="DNASU" id="1077931"/>
<dbReference type="KEGG" id="sfx:S2288"/>
<dbReference type="PATRIC" id="fig|623.156.peg.3728"/>
<dbReference type="HOGENOM" id="CLU_063236_4_0_6"/>
<dbReference type="Proteomes" id="UP000002673">
    <property type="component" value="Chromosome"/>
</dbReference>
<dbReference type="GO" id="GO:0003677">
    <property type="term" value="F:DNA binding"/>
    <property type="evidence" value="ECO:0007669"/>
    <property type="project" value="UniProtKB-KW"/>
</dbReference>
<dbReference type="GO" id="GO:0003700">
    <property type="term" value="F:DNA-binding transcription factor activity"/>
    <property type="evidence" value="ECO:0007669"/>
    <property type="project" value="InterPro"/>
</dbReference>
<dbReference type="GO" id="GO:0045892">
    <property type="term" value="P:negative regulation of DNA-templated transcription"/>
    <property type="evidence" value="ECO:0007669"/>
    <property type="project" value="TreeGrafter"/>
</dbReference>
<dbReference type="CDD" id="cd07377">
    <property type="entry name" value="WHTH_GntR"/>
    <property type="match status" value="1"/>
</dbReference>
<dbReference type="Gene3D" id="3.40.1410.10">
    <property type="entry name" value="Chorismate lyase-like"/>
    <property type="match status" value="1"/>
</dbReference>
<dbReference type="Gene3D" id="1.10.10.10">
    <property type="entry name" value="Winged helix-like DNA-binding domain superfamily/Winged helix DNA-binding domain"/>
    <property type="match status" value="1"/>
</dbReference>
<dbReference type="InterPro" id="IPR050679">
    <property type="entry name" value="Bact_HTH_transcr_reg"/>
</dbReference>
<dbReference type="InterPro" id="IPR028978">
    <property type="entry name" value="Chorismate_lyase_/UTRA_dom_sf"/>
</dbReference>
<dbReference type="InterPro" id="IPR000524">
    <property type="entry name" value="Tscrpt_reg_HTH_GntR"/>
</dbReference>
<dbReference type="InterPro" id="IPR011663">
    <property type="entry name" value="UTRA"/>
</dbReference>
<dbReference type="InterPro" id="IPR036388">
    <property type="entry name" value="WH-like_DNA-bd_sf"/>
</dbReference>
<dbReference type="InterPro" id="IPR036390">
    <property type="entry name" value="WH_DNA-bd_sf"/>
</dbReference>
<dbReference type="PANTHER" id="PTHR44846">
    <property type="entry name" value="MANNOSYL-D-GLYCERATE TRANSPORT/METABOLISM SYSTEM REPRESSOR MNGR-RELATED"/>
    <property type="match status" value="1"/>
</dbReference>
<dbReference type="PANTHER" id="PTHR44846:SF1">
    <property type="entry name" value="MANNOSYL-D-GLYCERATE TRANSPORT_METABOLISM SYSTEM REPRESSOR MNGR-RELATED"/>
    <property type="match status" value="1"/>
</dbReference>
<dbReference type="Pfam" id="PF00392">
    <property type="entry name" value="GntR"/>
    <property type="match status" value="1"/>
</dbReference>
<dbReference type="Pfam" id="PF07702">
    <property type="entry name" value="UTRA"/>
    <property type="match status" value="1"/>
</dbReference>
<dbReference type="PRINTS" id="PR00035">
    <property type="entry name" value="HTHGNTR"/>
</dbReference>
<dbReference type="SMART" id="SM00345">
    <property type="entry name" value="HTH_GNTR"/>
    <property type="match status" value="1"/>
</dbReference>
<dbReference type="SMART" id="SM00866">
    <property type="entry name" value="UTRA"/>
    <property type="match status" value="1"/>
</dbReference>
<dbReference type="SUPFAM" id="SSF64288">
    <property type="entry name" value="Chorismate lyase-like"/>
    <property type="match status" value="1"/>
</dbReference>
<dbReference type="SUPFAM" id="SSF46785">
    <property type="entry name" value="Winged helix' DNA-binding domain"/>
    <property type="match status" value="1"/>
</dbReference>
<dbReference type="PROSITE" id="PS50949">
    <property type="entry name" value="HTH_GNTR"/>
    <property type="match status" value="1"/>
</dbReference>
<name>GGAR_SHIFL</name>
<gene>
    <name evidence="1" type="primary">ggaR</name>
    <name type="synonym">yegW</name>
    <name type="ordered locus">S2288</name>
</gene>
<evidence type="ECO:0000250" key="1">
    <source>
        <dbReference type="UniProtKB" id="P0ACM5"/>
    </source>
</evidence>
<evidence type="ECO:0000255" key="2">
    <source>
        <dbReference type="PROSITE-ProRule" id="PRU00307"/>
    </source>
</evidence>
<protein>
    <recommendedName>
        <fullName evidence="1">HTH-type transcriptional regulator GgaR</fullName>
    </recommendedName>
    <alternativeName>
        <fullName evidence="1">Repressor of glycogen accumulation</fullName>
    </alternativeName>
</protein>
<keyword id="KW-0238">DNA-binding</keyword>
<keyword id="KW-0678">Repressor</keyword>
<keyword id="KW-0804">Transcription</keyword>
<keyword id="KW-0805">Transcription regulation</keyword>